<keyword id="KW-0997">Cell inner membrane</keyword>
<keyword id="KW-1003">Cell membrane</keyword>
<keyword id="KW-0444">Lipid biosynthesis</keyword>
<keyword id="KW-0443">Lipid metabolism</keyword>
<keyword id="KW-0472">Membrane</keyword>
<keyword id="KW-0594">Phospholipid biosynthesis</keyword>
<keyword id="KW-1208">Phospholipid metabolism</keyword>
<keyword id="KW-1185">Reference proteome</keyword>
<keyword id="KW-0808">Transferase</keyword>
<keyword id="KW-0812">Transmembrane</keyword>
<keyword id="KW-1133">Transmembrane helix</keyword>
<reference key="1">
    <citation type="journal article" date="2002" name="Nat. Biotechnol.">
        <title>Genome sequence of the dissimilatory metal ion-reducing bacterium Shewanella oneidensis.</title>
        <authorList>
            <person name="Heidelberg J.F."/>
            <person name="Paulsen I.T."/>
            <person name="Nelson K.E."/>
            <person name="Gaidos E.J."/>
            <person name="Nelson W.C."/>
            <person name="Read T.D."/>
            <person name="Eisen J.A."/>
            <person name="Seshadri R."/>
            <person name="Ward N.L."/>
            <person name="Methe B.A."/>
            <person name="Clayton R.A."/>
            <person name="Meyer T."/>
            <person name="Tsapin A."/>
            <person name="Scott J."/>
            <person name="Beanan M.J."/>
            <person name="Brinkac L.M."/>
            <person name="Daugherty S.C."/>
            <person name="DeBoy R.T."/>
            <person name="Dodson R.J."/>
            <person name="Durkin A.S."/>
            <person name="Haft D.H."/>
            <person name="Kolonay J.F."/>
            <person name="Madupu R."/>
            <person name="Peterson J.D."/>
            <person name="Umayam L.A."/>
            <person name="White O."/>
            <person name="Wolf A.M."/>
            <person name="Vamathevan J.J."/>
            <person name="Weidman J.F."/>
            <person name="Impraim M."/>
            <person name="Lee K."/>
            <person name="Berry K.J."/>
            <person name="Lee C."/>
            <person name="Mueller J."/>
            <person name="Khouri H.M."/>
            <person name="Gill J."/>
            <person name="Utterback T.R."/>
            <person name="McDonald L.A."/>
            <person name="Feldblyum T.V."/>
            <person name="Smith H.O."/>
            <person name="Venter J.C."/>
            <person name="Nealson K.H."/>
            <person name="Fraser C.M."/>
        </authorList>
    </citation>
    <scope>NUCLEOTIDE SEQUENCE [LARGE SCALE GENOMIC DNA]</scope>
    <source>
        <strain>ATCC 700550 / JCM 31522 / CIP 106686 / LMG 19005 / NCIMB 14063 / MR-1</strain>
    </source>
</reference>
<evidence type="ECO:0000255" key="1">
    <source>
        <dbReference type="HAMAP-Rule" id="MF_01043"/>
    </source>
</evidence>
<accession>P59251</accession>
<organism>
    <name type="scientific">Shewanella oneidensis (strain ATCC 700550 / JCM 31522 / CIP 106686 / LMG 19005 / NCIMB 14063 / MR-1)</name>
    <dbReference type="NCBI Taxonomy" id="211586"/>
    <lineage>
        <taxon>Bacteria</taxon>
        <taxon>Pseudomonadati</taxon>
        <taxon>Pseudomonadota</taxon>
        <taxon>Gammaproteobacteria</taxon>
        <taxon>Alteromonadales</taxon>
        <taxon>Shewanellaceae</taxon>
        <taxon>Shewanella</taxon>
    </lineage>
</organism>
<name>PLSY_SHEON</name>
<gene>
    <name evidence="1" type="primary">plsY</name>
    <name type="ordered locus">SO_1290</name>
</gene>
<proteinExistence type="inferred from homology"/>
<feature type="chain" id="PRO_0000188443" description="Glycerol-3-phosphate acyltransferase">
    <location>
        <begin position="1"/>
        <end position="203"/>
    </location>
</feature>
<feature type="transmembrane region" description="Helical" evidence="1">
    <location>
        <begin position="6"/>
        <end position="26"/>
    </location>
</feature>
<feature type="transmembrane region" description="Helical" evidence="1">
    <location>
        <begin position="82"/>
        <end position="102"/>
    </location>
</feature>
<feature type="transmembrane region" description="Helical" evidence="1">
    <location>
        <begin position="118"/>
        <end position="138"/>
    </location>
</feature>
<feature type="transmembrane region" description="Helical" evidence="1">
    <location>
        <begin position="141"/>
        <end position="161"/>
    </location>
</feature>
<protein>
    <recommendedName>
        <fullName evidence="1">Glycerol-3-phosphate acyltransferase</fullName>
    </recommendedName>
    <alternativeName>
        <fullName evidence="1">Acyl-PO4 G3P acyltransferase</fullName>
    </alternativeName>
    <alternativeName>
        <fullName evidence="1">Acyl-phosphate--glycerol-3-phosphate acyltransferase</fullName>
    </alternativeName>
    <alternativeName>
        <fullName evidence="1">G3P acyltransferase</fullName>
        <shortName evidence="1">GPAT</shortName>
        <ecNumber evidence="1">2.3.1.275</ecNumber>
    </alternativeName>
    <alternativeName>
        <fullName evidence="1">Lysophosphatidic acid synthase</fullName>
        <shortName evidence="1">LPA synthase</shortName>
    </alternativeName>
</protein>
<dbReference type="EC" id="2.3.1.275" evidence="1"/>
<dbReference type="EMBL" id="AE014299">
    <property type="protein sequence ID" value="AAN54357.1"/>
    <property type="molecule type" value="Genomic_DNA"/>
</dbReference>
<dbReference type="RefSeq" id="NP_716912.1">
    <property type="nucleotide sequence ID" value="NC_004347.2"/>
</dbReference>
<dbReference type="RefSeq" id="WP_011071503.1">
    <property type="nucleotide sequence ID" value="NC_004347.2"/>
</dbReference>
<dbReference type="SMR" id="P59251"/>
<dbReference type="STRING" id="211586.SO_1290"/>
<dbReference type="PaxDb" id="211586-SO_1290"/>
<dbReference type="KEGG" id="son:SO_1290"/>
<dbReference type="PATRIC" id="fig|211586.12.peg.1236"/>
<dbReference type="eggNOG" id="COG0344">
    <property type="taxonomic scope" value="Bacteria"/>
</dbReference>
<dbReference type="HOGENOM" id="CLU_081254_0_2_6"/>
<dbReference type="OrthoDB" id="9777124at2"/>
<dbReference type="PhylomeDB" id="P59251"/>
<dbReference type="BioCyc" id="SONE211586:G1GMP-1191-MONOMER"/>
<dbReference type="UniPathway" id="UPA00085"/>
<dbReference type="Proteomes" id="UP000008186">
    <property type="component" value="Chromosome"/>
</dbReference>
<dbReference type="GO" id="GO:0005886">
    <property type="term" value="C:plasma membrane"/>
    <property type="evidence" value="ECO:0000318"/>
    <property type="project" value="GO_Central"/>
</dbReference>
<dbReference type="GO" id="GO:0043772">
    <property type="term" value="F:acyl-phosphate glycerol-3-phosphate acyltransferase activity"/>
    <property type="evidence" value="ECO:0007669"/>
    <property type="project" value="UniProtKB-UniRule"/>
</dbReference>
<dbReference type="GO" id="GO:0008654">
    <property type="term" value="P:phospholipid biosynthetic process"/>
    <property type="evidence" value="ECO:0007669"/>
    <property type="project" value="UniProtKB-UniRule"/>
</dbReference>
<dbReference type="HAMAP" id="MF_01043">
    <property type="entry name" value="PlsY"/>
    <property type="match status" value="1"/>
</dbReference>
<dbReference type="InterPro" id="IPR003811">
    <property type="entry name" value="G3P_acylTferase_PlsY"/>
</dbReference>
<dbReference type="NCBIfam" id="TIGR00023">
    <property type="entry name" value="glycerol-3-phosphate 1-O-acyltransferase PlsY"/>
    <property type="match status" value="1"/>
</dbReference>
<dbReference type="PANTHER" id="PTHR30309:SF0">
    <property type="entry name" value="GLYCEROL-3-PHOSPHATE ACYLTRANSFERASE-RELATED"/>
    <property type="match status" value="1"/>
</dbReference>
<dbReference type="PANTHER" id="PTHR30309">
    <property type="entry name" value="INNER MEMBRANE PROTEIN YGIH"/>
    <property type="match status" value="1"/>
</dbReference>
<dbReference type="Pfam" id="PF02660">
    <property type="entry name" value="G3P_acyltransf"/>
    <property type="match status" value="1"/>
</dbReference>
<dbReference type="SMART" id="SM01207">
    <property type="entry name" value="G3P_acyltransf"/>
    <property type="match status" value="1"/>
</dbReference>
<sequence>MSQLSLTLLMIVAAYLAGSVSSAVLVCRMRGLPDPRSQGSGNPGATNVLRIGGASSAAMVLFFDMLKGALPTYLAYLMGIDAISLGLIAIAACLGHIYPVFFGFKGGKGVATAFGAMAPIGDDLAICLMASWVVLVLISRYSSLAAIITALLAPLYTWWLDDRFTIPVAMLSTLIIIRHKDNIKRLLKGEESKVSRKRRPKIP</sequence>
<comment type="function">
    <text evidence="1">Catalyzes the transfer of an acyl group from acyl-phosphate (acyl-PO(4)) to glycerol-3-phosphate (G3P) to form lysophosphatidic acid (LPA). This enzyme utilizes acyl-phosphate as fatty acyl donor, but not acyl-CoA or acyl-ACP.</text>
</comment>
<comment type="catalytic activity">
    <reaction evidence="1">
        <text>an acyl phosphate + sn-glycerol 3-phosphate = a 1-acyl-sn-glycero-3-phosphate + phosphate</text>
        <dbReference type="Rhea" id="RHEA:34075"/>
        <dbReference type="ChEBI" id="CHEBI:43474"/>
        <dbReference type="ChEBI" id="CHEBI:57597"/>
        <dbReference type="ChEBI" id="CHEBI:57970"/>
        <dbReference type="ChEBI" id="CHEBI:59918"/>
        <dbReference type="EC" id="2.3.1.275"/>
    </reaction>
</comment>
<comment type="pathway">
    <text evidence="1">Lipid metabolism; phospholipid metabolism.</text>
</comment>
<comment type="subunit">
    <text evidence="1">Probably interacts with PlsX.</text>
</comment>
<comment type="subcellular location">
    <subcellularLocation>
        <location evidence="1">Cell inner membrane</location>
        <topology evidence="1">Multi-pass membrane protein</topology>
    </subcellularLocation>
</comment>
<comment type="similarity">
    <text evidence="1">Belongs to the PlsY family.</text>
</comment>